<gene>
    <name evidence="8" type="primary">ubxn-1</name>
    <name evidence="8" type="ORF">F23C8.4</name>
</gene>
<comment type="function">
    <text evidence="5">Ubiquitin-binding protein which acts as an adapter for ATPase cdc-48.1 and/or cdc-48.2, conferring substrate specificity (PubMed:20977550). Together with ubxn-2 and ubxn-3, plays a role in hermaphrodite spermatogenesis probably by promoting the degradation of sex determination terminal factor tra-1.</text>
</comment>
<comment type="subunit">
    <text evidence="5">Interacts with cdc-48.1 (via N-terminus) and cdc-48.2 (via N-terminus) in vitro; the interaction with cdc-48.1 is not detected in vivo.</text>
</comment>
<comment type="interaction">
    <interactant intactId="EBI-320236">
        <id>Q9TXH9</id>
    </interactant>
    <interactant intactId="EBI-320245">
        <id>P54811</id>
        <label>cdc-48.1</label>
    </interactant>
    <organismsDiffer>false</organismsDiffer>
    <experiments>3</experiments>
</comment>
<comment type="subcellular location">
    <subcellularLocation>
        <location evidence="5">Cytoplasm</location>
        <location evidence="5">Perinuclear region</location>
    </subcellularLocation>
    <text evidence="5">Colocalizes with cdc-48.1 to the perinuclear region in spermatocytes.</text>
</comment>
<comment type="tissue specificity">
    <text evidence="4 5">Expressed in the germline (at protein level) (PubMed:17498661, PubMed:20977550). Expressed in spermatocytes but not in mature sperm (at protein level) (PubMed:20977550). Ubiquitously expressed (PubMed:17498661). Predominantly expressed in the spermatheca (PubMed:17498661).</text>
</comment>
<comment type="developmental stage">
    <text evidence="4">Expressed in embryos, L4 larvae and adults. Expressed to a lesser extent between L1 and L3 larval stages.</text>
</comment>
<comment type="disruption phenotype">
    <text evidence="5">RNAi-mediated knockdown does not cause any visible phenotype. Simultaneous RNAi-mediated knockdown of ubxn-2 and ubxn-3, causes 50 percent embryonic lethality. The surviving hermaphrodite progeny are sterile due to a lack of sperm. Abnormal accumulation of sex determination terminal factor tra-1. Germline development is normal. In males, sperm production is normal.</text>
</comment>
<feature type="chain" id="PRO_0000444373" description="UBX domain-containing protein 1">
    <location>
        <begin position="1"/>
        <end position="299"/>
    </location>
</feature>
<feature type="domain" description="UBX" evidence="2">
    <location>
        <begin position="218"/>
        <end position="295"/>
    </location>
</feature>
<feature type="region of interest" description="Disordered" evidence="3">
    <location>
        <begin position="39"/>
        <end position="61"/>
    </location>
</feature>
<feature type="region of interest" description="Disordered" evidence="3">
    <location>
        <begin position="127"/>
        <end position="176"/>
    </location>
</feature>
<feature type="region of interest" description="Disordered" evidence="3">
    <location>
        <begin position="191"/>
        <end position="218"/>
    </location>
</feature>
<feature type="coiled-coil region" evidence="1">
    <location>
        <begin position="111"/>
        <end position="179"/>
    </location>
</feature>
<feature type="compositionally biased region" description="Low complexity" evidence="3">
    <location>
        <begin position="46"/>
        <end position="61"/>
    </location>
</feature>
<feature type="compositionally biased region" description="Basic and acidic residues" evidence="3">
    <location>
        <begin position="128"/>
        <end position="176"/>
    </location>
</feature>
<feature type="compositionally biased region" description="Low complexity" evidence="3">
    <location>
        <begin position="201"/>
        <end position="213"/>
    </location>
</feature>
<evidence type="ECO:0000255" key="1"/>
<evidence type="ECO:0000255" key="2">
    <source>
        <dbReference type="PROSITE-ProRule" id="PRU00215"/>
    </source>
</evidence>
<evidence type="ECO:0000256" key="3">
    <source>
        <dbReference type="SAM" id="MobiDB-lite"/>
    </source>
</evidence>
<evidence type="ECO:0000269" key="4">
    <source>
    </source>
</evidence>
<evidence type="ECO:0000269" key="5">
    <source>
    </source>
</evidence>
<evidence type="ECO:0000305" key="6"/>
<evidence type="ECO:0000312" key="7">
    <source>
        <dbReference type="Proteomes" id="UP000001940"/>
    </source>
</evidence>
<evidence type="ECO:0000312" key="8">
    <source>
        <dbReference type="WormBase" id="F23C8.4"/>
    </source>
</evidence>
<organism evidence="7">
    <name type="scientific">Caenorhabditis elegans</name>
    <dbReference type="NCBI Taxonomy" id="6239"/>
    <lineage>
        <taxon>Eukaryota</taxon>
        <taxon>Metazoa</taxon>
        <taxon>Ecdysozoa</taxon>
        <taxon>Nematoda</taxon>
        <taxon>Chromadorea</taxon>
        <taxon>Rhabditida</taxon>
        <taxon>Rhabditina</taxon>
        <taxon>Rhabditomorpha</taxon>
        <taxon>Rhabditoidea</taxon>
        <taxon>Rhabditidae</taxon>
        <taxon>Peloderinae</taxon>
        <taxon>Caenorhabditis</taxon>
    </lineage>
</organism>
<name>UBXN1_CAEEL</name>
<dbReference type="EMBL" id="BX284601">
    <property type="protein sequence ID" value="CCD69888.1"/>
    <property type="molecule type" value="Genomic_DNA"/>
</dbReference>
<dbReference type="PIR" id="T33830">
    <property type="entry name" value="T33830"/>
</dbReference>
<dbReference type="RefSeq" id="NP_490978.1">
    <property type="nucleotide sequence ID" value="NM_058577.8"/>
</dbReference>
<dbReference type="SMR" id="Q9TXH9"/>
<dbReference type="DIP" id="DIP-27462N"/>
<dbReference type="FunCoup" id="Q9TXH9">
    <property type="interactions" value="2851"/>
</dbReference>
<dbReference type="IntAct" id="Q9TXH9">
    <property type="interactions" value="8"/>
</dbReference>
<dbReference type="STRING" id="6239.F23C8.4.2"/>
<dbReference type="PaxDb" id="6239-F23C8.4"/>
<dbReference type="PeptideAtlas" id="Q9TXH9"/>
<dbReference type="EnsemblMetazoa" id="F23C8.4.1">
    <property type="protein sequence ID" value="F23C8.4.1"/>
    <property type="gene ID" value="WBGene00017733"/>
</dbReference>
<dbReference type="GeneID" id="171804"/>
<dbReference type="KEGG" id="cel:CELE_F23C8.4"/>
<dbReference type="UCSC" id="F23C8.4">
    <property type="organism name" value="c. elegans"/>
</dbReference>
<dbReference type="AGR" id="WB:WBGene00017733"/>
<dbReference type="CTD" id="171804"/>
<dbReference type="WormBase" id="F23C8.4">
    <property type="protein sequence ID" value="CE20713"/>
    <property type="gene ID" value="WBGene00017733"/>
    <property type="gene designation" value="ubxn-1"/>
</dbReference>
<dbReference type="eggNOG" id="KOG2689">
    <property type="taxonomic scope" value="Eukaryota"/>
</dbReference>
<dbReference type="GeneTree" id="ENSGT00940000156457"/>
<dbReference type="HOGENOM" id="CLU_047594_1_0_1"/>
<dbReference type="InParanoid" id="Q9TXH9"/>
<dbReference type="OMA" id="AQHFPRK"/>
<dbReference type="OrthoDB" id="10254930at2759"/>
<dbReference type="PhylomeDB" id="Q9TXH9"/>
<dbReference type="Reactome" id="R-CEL-532668">
    <property type="pathway name" value="N-glycan trimming in the ER and Calnexin/Calreticulin cycle"/>
</dbReference>
<dbReference type="PRO" id="PR:Q9TXH9"/>
<dbReference type="Proteomes" id="UP000001940">
    <property type="component" value="Chromosome I"/>
</dbReference>
<dbReference type="Bgee" id="WBGene00017733">
    <property type="expression patterns" value="Expressed in germ line (C elegans) and 4 other cell types or tissues"/>
</dbReference>
<dbReference type="GO" id="GO:0005737">
    <property type="term" value="C:cytoplasm"/>
    <property type="evidence" value="ECO:0000318"/>
    <property type="project" value="GO_Central"/>
</dbReference>
<dbReference type="GO" id="GO:0005634">
    <property type="term" value="C:nucleus"/>
    <property type="evidence" value="ECO:0000318"/>
    <property type="project" value="GO_Central"/>
</dbReference>
<dbReference type="GO" id="GO:0048471">
    <property type="term" value="C:perinuclear region of cytoplasm"/>
    <property type="evidence" value="ECO:0000314"/>
    <property type="project" value="WormBase"/>
</dbReference>
<dbReference type="GO" id="GO:0036435">
    <property type="term" value="F:K48-linked polyubiquitin modification-dependent protein binding"/>
    <property type="evidence" value="ECO:0000314"/>
    <property type="project" value="UniProtKB"/>
</dbReference>
<dbReference type="GO" id="GO:0030154">
    <property type="term" value="P:cell differentiation"/>
    <property type="evidence" value="ECO:0007669"/>
    <property type="project" value="UniProtKB-KW"/>
</dbReference>
<dbReference type="GO" id="GO:0036498">
    <property type="term" value="P:IRE1-mediated unfolded protein response"/>
    <property type="evidence" value="ECO:0007007"/>
    <property type="project" value="WormBase"/>
</dbReference>
<dbReference type="GO" id="GO:0042006">
    <property type="term" value="P:masculinization of hermaphroditic germ-line"/>
    <property type="evidence" value="ECO:0000316"/>
    <property type="project" value="UniProtKB"/>
</dbReference>
<dbReference type="GO" id="GO:0032435">
    <property type="term" value="P:negative regulation of proteasomal ubiquitin-dependent protein catabolic process"/>
    <property type="evidence" value="ECO:0000318"/>
    <property type="project" value="GO_Central"/>
</dbReference>
<dbReference type="GO" id="GO:1903094">
    <property type="term" value="P:negative regulation of protein K48-linked deubiquitination"/>
    <property type="evidence" value="ECO:0000318"/>
    <property type="project" value="GO_Central"/>
</dbReference>
<dbReference type="GO" id="GO:0031397">
    <property type="term" value="P:negative regulation of protein ubiquitination"/>
    <property type="evidence" value="ECO:0000318"/>
    <property type="project" value="GO_Central"/>
</dbReference>
<dbReference type="GO" id="GO:0045732">
    <property type="term" value="P:positive regulation of protein catabolic process"/>
    <property type="evidence" value="ECO:0000316"/>
    <property type="project" value="UniProtKB"/>
</dbReference>
<dbReference type="GO" id="GO:0007283">
    <property type="term" value="P:spermatogenesis"/>
    <property type="evidence" value="ECO:0000316"/>
    <property type="project" value="UniProtKB"/>
</dbReference>
<dbReference type="Gene3D" id="1.10.8.10">
    <property type="entry name" value="DNA helicase RuvA subunit, C-terminal domain"/>
    <property type="match status" value="1"/>
</dbReference>
<dbReference type="Gene3D" id="3.10.20.90">
    <property type="entry name" value="Phosphatidylinositol 3-kinase Catalytic Subunit, Chain A, domain 1"/>
    <property type="match status" value="1"/>
</dbReference>
<dbReference type="InterPro" id="IPR009060">
    <property type="entry name" value="UBA-like_sf"/>
</dbReference>
<dbReference type="InterPro" id="IPR029071">
    <property type="entry name" value="Ubiquitin-like_domsf"/>
</dbReference>
<dbReference type="InterPro" id="IPR001012">
    <property type="entry name" value="UBX_dom"/>
</dbReference>
<dbReference type="InterPro" id="IPR013087">
    <property type="entry name" value="Znf_C2H2_type"/>
</dbReference>
<dbReference type="PANTHER" id="PTHR46340">
    <property type="entry name" value="UBX DOMAIN-CONTAINING PROTEIN 1"/>
    <property type="match status" value="1"/>
</dbReference>
<dbReference type="PANTHER" id="PTHR46340:SF1">
    <property type="entry name" value="UBX DOMAIN-CONTAINING PROTEIN 1"/>
    <property type="match status" value="1"/>
</dbReference>
<dbReference type="Pfam" id="PF00789">
    <property type="entry name" value="UBX"/>
    <property type="match status" value="1"/>
</dbReference>
<dbReference type="SMART" id="SM00166">
    <property type="entry name" value="UBX"/>
    <property type="match status" value="1"/>
</dbReference>
<dbReference type="SUPFAM" id="SSF46934">
    <property type="entry name" value="UBA-like"/>
    <property type="match status" value="1"/>
</dbReference>
<dbReference type="SUPFAM" id="SSF54236">
    <property type="entry name" value="Ubiquitin-like"/>
    <property type="match status" value="1"/>
</dbReference>
<dbReference type="PROSITE" id="PS50033">
    <property type="entry name" value="UBX"/>
    <property type="match status" value="1"/>
</dbReference>
<dbReference type="PROSITE" id="PS00028">
    <property type="entry name" value="ZINC_FINGER_C2H2_1"/>
    <property type="match status" value="1"/>
</dbReference>
<reference evidence="7" key="1">
    <citation type="journal article" date="1998" name="Science">
        <title>Genome sequence of the nematode C. elegans: a platform for investigating biology.</title>
        <authorList>
            <consortium name="The C. elegans sequencing consortium"/>
        </authorList>
    </citation>
    <scope>NUCLEOTIDE SEQUENCE [LARGE SCALE GENOMIC DNA]</scope>
    <source>
        <strain evidence="7">Bristol N2</strain>
    </source>
</reference>
<reference evidence="6" key="2">
    <citation type="journal article" date="2007" name="Biochem. Biophys. Res. Commun.">
        <title>Differential expression pattern of UBX family genes in Caenorhabditis elegans.</title>
        <authorList>
            <person name="Yamauchi S."/>
            <person name="Sasagawa Y."/>
            <person name="Ogura T."/>
            <person name="Yamanaka K."/>
        </authorList>
    </citation>
    <scope>TISSUE SPECIFICITY</scope>
    <scope>DEVELOPMENTAL STAGE</scope>
</reference>
<reference evidence="6" key="3">
    <citation type="journal article" date="2010" name="Genes Cells">
        <title>Caenorhabditis elegans UBX cofactors for CDC-48/p97 control spermatogenesis.</title>
        <authorList>
            <person name="Sasagawa Y."/>
            <person name="Yamanaka K."/>
            <person name="Saito-Sasagawa Y."/>
            <person name="Ogura T."/>
        </authorList>
    </citation>
    <scope>FUNCTION</scope>
    <scope>INTERACTION WITH CDC-48.1 AND CDC-48.2</scope>
    <scope>SUBCELLULAR LOCATION</scope>
    <scope>TISSUE SPECIFICITY</scope>
    <scope>DISRUPTION PHENOTYPE</scope>
</reference>
<accession>Q9TXH9</accession>
<proteinExistence type="evidence at protein level"/>
<protein>
    <recommendedName>
        <fullName evidence="6">UBX domain-containing protein 1</fullName>
    </recommendedName>
</protein>
<sequence>MSIAQQLMDMGFPADKAEAAAGNNRNLDQALDWIEKDGAGVPMETDAPAQAAPGAADSGAPPVAASFKCDDCGKLLANDDAIMFHASKTKHENFSESSEAIKPLTAEEKAAKVLEIREKIKVHQAKKAKLEAEENREKEKKRREDGKAMISHKEAARDREIREAAQDRRREKNEDEIARKRVLEQIRLDKEARKAKASGQPVPEAKPAPSAAPVAPPKDYSTTTLQFRLLDGQTVRQQFEANEPLAMVRAWVETNHANGVPFTLMTPFPRKVFTEDDMGTPLKVLNLVPSANVILNRAA</sequence>
<keyword id="KW-0175">Coiled coil</keyword>
<keyword id="KW-0963">Cytoplasm</keyword>
<keyword id="KW-0221">Differentiation</keyword>
<keyword id="KW-1185">Reference proteome</keyword>
<keyword id="KW-0744">Spermatogenesis</keyword>